<comment type="function">
    <text evidence="1">Binds to the 23S rRNA.</text>
</comment>
<comment type="subunit">
    <text evidence="1 3">Part of the 50S ribosomal subunit.</text>
</comment>
<comment type="similarity">
    <text evidence="1">Belongs to the universal ribosomal protein uL15 family.</text>
</comment>
<reference key="1">
    <citation type="journal article" date="1999" name="Genetics">
        <title>Divergence of the hyperthermophilic archaea Pyrococcus furiosus and P. horikoshii inferred from complete genomic sequences.</title>
        <authorList>
            <person name="Maeder D.L."/>
            <person name="Weiss R.B."/>
            <person name="Dunn D.M."/>
            <person name="Cherry J.L."/>
            <person name="Gonzalez J.M."/>
            <person name="DiRuggiero J."/>
            <person name="Robb F.T."/>
        </authorList>
    </citation>
    <scope>NUCLEOTIDE SEQUENCE [LARGE SCALE GENOMIC DNA]</scope>
    <source>
        <strain>ATCC 43587 / DSM 3638 / JCM 8422 / Vc1</strain>
    </source>
</reference>
<reference evidence="4" key="2">
    <citation type="journal article" date="2013" name="Nucleic Acids Res.">
        <title>Promiscuous behaviour of archaeal ribosomal proteins: implications for eukaryotic ribosome evolution.</title>
        <authorList>
            <person name="Armache J.P."/>
            <person name="Anger A.M."/>
            <person name="Marquez V."/>
            <person name="Franckenberg S."/>
            <person name="Frohlich T."/>
            <person name="Villa E."/>
            <person name="Berninghausen O."/>
            <person name="Thomm M."/>
            <person name="Arnold G.J."/>
            <person name="Beckmann R."/>
            <person name="Wilson D.N."/>
        </authorList>
    </citation>
    <scope>STRUCTURE BY ELECTRON MICROSCOPY (6.60 ANGSTROMS) IN THE 70S RIBOSOME</scope>
    <scope>SUBUNIT</scope>
</reference>
<proteinExistence type="evidence at protein level"/>
<gene>
    <name evidence="1" type="primary">rpl15</name>
    <name type="ordered locus">PF1802</name>
</gene>
<feature type="chain" id="PRO_0000104871" description="Large ribosomal subunit protein uL15">
    <location>
        <begin position="1"/>
        <end position="147"/>
    </location>
</feature>
<feature type="region of interest" description="Disordered" evidence="2">
    <location>
        <begin position="1"/>
        <end position="43"/>
    </location>
</feature>
<feature type="compositionally biased region" description="Basic residues" evidence="2">
    <location>
        <begin position="1"/>
        <end position="28"/>
    </location>
</feature>
<feature type="compositionally biased region" description="Gly residues" evidence="2">
    <location>
        <begin position="29"/>
        <end position="38"/>
    </location>
</feature>
<protein>
    <recommendedName>
        <fullName evidence="1">Large ribosomal subunit protein uL15</fullName>
    </recommendedName>
    <alternativeName>
        <fullName>50S ribosomal protein L15</fullName>
    </alternativeName>
</protein>
<evidence type="ECO:0000255" key="1">
    <source>
        <dbReference type="HAMAP-Rule" id="MF_01341"/>
    </source>
</evidence>
<evidence type="ECO:0000256" key="2">
    <source>
        <dbReference type="SAM" id="MobiDB-lite"/>
    </source>
</evidence>
<evidence type="ECO:0000269" key="3">
    <source>
    </source>
</evidence>
<evidence type="ECO:0007744" key="4">
    <source>
        <dbReference type="PDB" id="4V6U"/>
    </source>
</evidence>
<sequence>MIRRRKKVRKLRGSHTHGWGCKKKHRGGGSKGGRGMAGTGKRNKSKWTWTIKYAPDHLGKRGFSRPPEVQREVRVVNLKFIDEHLDELMQMGIAYEEGGKIIVDVTQFADKVLGTGKLTRPLVIKARAFSPKAEEKIKAAGGEAVLV</sequence>
<keyword id="KW-0002">3D-structure</keyword>
<keyword id="KW-1185">Reference proteome</keyword>
<keyword id="KW-0687">Ribonucleoprotein</keyword>
<keyword id="KW-0689">Ribosomal protein</keyword>
<keyword id="KW-0694">RNA-binding</keyword>
<keyword id="KW-0699">rRNA-binding</keyword>
<organism>
    <name type="scientific">Pyrococcus furiosus (strain ATCC 43587 / DSM 3638 / JCM 8422 / Vc1)</name>
    <dbReference type="NCBI Taxonomy" id="186497"/>
    <lineage>
        <taxon>Archaea</taxon>
        <taxon>Methanobacteriati</taxon>
        <taxon>Methanobacteriota</taxon>
        <taxon>Thermococci</taxon>
        <taxon>Thermococcales</taxon>
        <taxon>Thermococcaceae</taxon>
        <taxon>Pyrococcus</taxon>
    </lineage>
</organism>
<accession>Q8U018</accession>
<dbReference type="EMBL" id="AE009950">
    <property type="protein sequence ID" value="AAL81926.1"/>
    <property type="molecule type" value="Genomic_DNA"/>
</dbReference>
<dbReference type="RefSeq" id="WP_011012943.1">
    <property type="nucleotide sequence ID" value="NZ_CP023154.1"/>
</dbReference>
<dbReference type="PDB" id="4V4N">
    <property type="method" value="EM"/>
    <property type="resolution" value="9.00 A"/>
    <property type="chains" value="L=1-147"/>
</dbReference>
<dbReference type="PDB" id="4V6U">
    <property type="method" value="EM"/>
    <property type="resolution" value="6.60 A"/>
    <property type="chains" value="BL=1-147"/>
</dbReference>
<dbReference type="PDBsum" id="4V4N"/>
<dbReference type="PDBsum" id="4V6U"/>
<dbReference type="SMR" id="Q8U018"/>
<dbReference type="STRING" id="186497.PF1802"/>
<dbReference type="PaxDb" id="186497-PF1802"/>
<dbReference type="KEGG" id="pfu:PF1802"/>
<dbReference type="PATRIC" id="fig|186497.12.peg.1873"/>
<dbReference type="eggNOG" id="arCOG00779">
    <property type="taxonomic scope" value="Archaea"/>
</dbReference>
<dbReference type="HOGENOM" id="CLU_109163_0_0_2"/>
<dbReference type="OrthoDB" id="9418at2157"/>
<dbReference type="PhylomeDB" id="Q8U018"/>
<dbReference type="Proteomes" id="UP000001013">
    <property type="component" value="Chromosome"/>
</dbReference>
<dbReference type="GO" id="GO:0022625">
    <property type="term" value="C:cytosolic large ribosomal subunit"/>
    <property type="evidence" value="ECO:0007669"/>
    <property type="project" value="TreeGrafter"/>
</dbReference>
<dbReference type="GO" id="GO:0019843">
    <property type="term" value="F:rRNA binding"/>
    <property type="evidence" value="ECO:0007669"/>
    <property type="project" value="UniProtKB-UniRule"/>
</dbReference>
<dbReference type="GO" id="GO:0003735">
    <property type="term" value="F:structural constituent of ribosome"/>
    <property type="evidence" value="ECO:0007669"/>
    <property type="project" value="InterPro"/>
</dbReference>
<dbReference type="GO" id="GO:0006412">
    <property type="term" value="P:translation"/>
    <property type="evidence" value="ECO:0007669"/>
    <property type="project" value="UniProtKB-UniRule"/>
</dbReference>
<dbReference type="FunFam" id="4.10.990.10:FF:000001">
    <property type="entry name" value="50S ribosomal protein L15"/>
    <property type="match status" value="1"/>
</dbReference>
<dbReference type="Gene3D" id="3.100.10.10">
    <property type="match status" value="1"/>
</dbReference>
<dbReference type="Gene3D" id="4.10.990.10">
    <property type="match status" value="1"/>
</dbReference>
<dbReference type="HAMAP" id="MF_01341">
    <property type="entry name" value="Ribosomal_uL15"/>
    <property type="match status" value="1"/>
</dbReference>
<dbReference type="InterPro" id="IPR027386">
    <property type="entry name" value="Rbsml_uL15_N"/>
</dbReference>
<dbReference type="InterPro" id="IPR030878">
    <property type="entry name" value="Ribosomal_uL15"/>
</dbReference>
<dbReference type="InterPro" id="IPR021131">
    <property type="entry name" value="Ribosomal_uL15/eL18"/>
</dbReference>
<dbReference type="InterPro" id="IPR036227">
    <property type="entry name" value="Ribosomal_uL15/eL18_sf"/>
</dbReference>
<dbReference type="InterPro" id="IPR001196">
    <property type="entry name" value="Ribosomal_uL15_CS"/>
</dbReference>
<dbReference type="PANTHER" id="PTHR11721">
    <property type="entry name" value="60S RIBOSOMAL PROTEIN L27A"/>
    <property type="match status" value="1"/>
</dbReference>
<dbReference type="PANTHER" id="PTHR11721:SF3">
    <property type="entry name" value="LARGE RIBOSOMAL SUBUNIT PROTEIN UL15"/>
    <property type="match status" value="1"/>
</dbReference>
<dbReference type="Pfam" id="PF00828">
    <property type="entry name" value="Ribosomal_L27A"/>
    <property type="match status" value="1"/>
</dbReference>
<dbReference type="SUPFAM" id="SSF52080">
    <property type="entry name" value="Ribosomal proteins L15p and L18e"/>
    <property type="match status" value="1"/>
</dbReference>
<dbReference type="PROSITE" id="PS00475">
    <property type="entry name" value="RIBOSOMAL_L15"/>
    <property type="match status" value="1"/>
</dbReference>
<name>RL15_PYRFU</name>